<gene>
    <name evidence="1" type="primary">ruvB</name>
    <name type="ordered locus">BAbS19_I16020</name>
</gene>
<keyword id="KW-0067">ATP-binding</keyword>
<keyword id="KW-0963">Cytoplasm</keyword>
<keyword id="KW-0227">DNA damage</keyword>
<keyword id="KW-0233">DNA recombination</keyword>
<keyword id="KW-0234">DNA repair</keyword>
<keyword id="KW-0238">DNA-binding</keyword>
<keyword id="KW-0378">Hydrolase</keyword>
<keyword id="KW-0547">Nucleotide-binding</keyword>
<organism>
    <name type="scientific">Brucella abortus (strain S19)</name>
    <dbReference type="NCBI Taxonomy" id="430066"/>
    <lineage>
        <taxon>Bacteria</taxon>
        <taxon>Pseudomonadati</taxon>
        <taxon>Pseudomonadota</taxon>
        <taxon>Alphaproteobacteria</taxon>
        <taxon>Hyphomicrobiales</taxon>
        <taxon>Brucellaceae</taxon>
        <taxon>Brucella/Ochrobactrum group</taxon>
        <taxon>Brucella</taxon>
    </lineage>
</organism>
<dbReference type="EC" id="3.6.4.-" evidence="1"/>
<dbReference type="EMBL" id="CP000887">
    <property type="protein sequence ID" value="ACD73086.1"/>
    <property type="molecule type" value="Genomic_DNA"/>
</dbReference>
<dbReference type="RefSeq" id="WP_002964791.1">
    <property type="nucleotide sequence ID" value="NC_010742.1"/>
</dbReference>
<dbReference type="SMR" id="B2S7D9"/>
<dbReference type="GeneID" id="97533144"/>
<dbReference type="KEGG" id="bmc:BAbS19_I16020"/>
<dbReference type="HOGENOM" id="CLU_055599_1_0_5"/>
<dbReference type="Proteomes" id="UP000002565">
    <property type="component" value="Chromosome 1"/>
</dbReference>
<dbReference type="GO" id="GO:0005737">
    <property type="term" value="C:cytoplasm"/>
    <property type="evidence" value="ECO:0007669"/>
    <property type="project" value="UniProtKB-SubCell"/>
</dbReference>
<dbReference type="GO" id="GO:0048476">
    <property type="term" value="C:Holliday junction resolvase complex"/>
    <property type="evidence" value="ECO:0007669"/>
    <property type="project" value="UniProtKB-UniRule"/>
</dbReference>
<dbReference type="GO" id="GO:0005524">
    <property type="term" value="F:ATP binding"/>
    <property type="evidence" value="ECO:0007669"/>
    <property type="project" value="UniProtKB-UniRule"/>
</dbReference>
<dbReference type="GO" id="GO:0016887">
    <property type="term" value="F:ATP hydrolysis activity"/>
    <property type="evidence" value="ECO:0007669"/>
    <property type="project" value="InterPro"/>
</dbReference>
<dbReference type="GO" id="GO:0000400">
    <property type="term" value="F:four-way junction DNA binding"/>
    <property type="evidence" value="ECO:0007669"/>
    <property type="project" value="UniProtKB-UniRule"/>
</dbReference>
<dbReference type="GO" id="GO:0009378">
    <property type="term" value="F:four-way junction helicase activity"/>
    <property type="evidence" value="ECO:0007669"/>
    <property type="project" value="InterPro"/>
</dbReference>
<dbReference type="GO" id="GO:0006310">
    <property type="term" value="P:DNA recombination"/>
    <property type="evidence" value="ECO:0007669"/>
    <property type="project" value="UniProtKB-UniRule"/>
</dbReference>
<dbReference type="GO" id="GO:0006281">
    <property type="term" value="P:DNA repair"/>
    <property type="evidence" value="ECO:0007669"/>
    <property type="project" value="UniProtKB-UniRule"/>
</dbReference>
<dbReference type="CDD" id="cd00009">
    <property type="entry name" value="AAA"/>
    <property type="match status" value="1"/>
</dbReference>
<dbReference type="Gene3D" id="1.10.8.60">
    <property type="match status" value="1"/>
</dbReference>
<dbReference type="Gene3D" id="3.40.50.300">
    <property type="entry name" value="P-loop containing nucleotide triphosphate hydrolases"/>
    <property type="match status" value="1"/>
</dbReference>
<dbReference type="Gene3D" id="1.10.10.10">
    <property type="entry name" value="Winged helix-like DNA-binding domain superfamily/Winged helix DNA-binding domain"/>
    <property type="match status" value="1"/>
</dbReference>
<dbReference type="HAMAP" id="MF_00016">
    <property type="entry name" value="DNA_HJ_migration_RuvB"/>
    <property type="match status" value="1"/>
</dbReference>
<dbReference type="InterPro" id="IPR003593">
    <property type="entry name" value="AAA+_ATPase"/>
</dbReference>
<dbReference type="InterPro" id="IPR041445">
    <property type="entry name" value="AAA_lid_4"/>
</dbReference>
<dbReference type="InterPro" id="IPR000641">
    <property type="entry name" value="CbxX/CfxQ"/>
</dbReference>
<dbReference type="InterPro" id="IPR004605">
    <property type="entry name" value="DNA_helicase_Holl-junc_RuvB"/>
</dbReference>
<dbReference type="InterPro" id="IPR027417">
    <property type="entry name" value="P-loop_NTPase"/>
</dbReference>
<dbReference type="InterPro" id="IPR008824">
    <property type="entry name" value="RuvB-like_N"/>
</dbReference>
<dbReference type="InterPro" id="IPR008823">
    <property type="entry name" value="RuvB_C"/>
</dbReference>
<dbReference type="InterPro" id="IPR036388">
    <property type="entry name" value="WH-like_DNA-bd_sf"/>
</dbReference>
<dbReference type="InterPro" id="IPR036390">
    <property type="entry name" value="WH_DNA-bd_sf"/>
</dbReference>
<dbReference type="NCBIfam" id="NF000868">
    <property type="entry name" value="PRK00080.1"/>
    <property type="match status" value="1"/>
</dbReference>
<dbReference type="NCBIfam" id="TIGR00635">
    <property type="entry name" value="ruvB"/>
    <property type="match status" value="1"/>
</dbReference>
<dbReference type="PANTHER" id="PTHR42848">
    <property type="match status" value="1"/>
</dbReference>
<dbReference type="PANTHER" id="PTHR42848:SF1">
    <property type="entry name" value="HOLLIDAY JUNCTION BRANCH MIGRATION COMPLEX SUBUNIT RUVB"/>
    <property type="match status" value="1"/>
</dbReference>
<dbReference type="Pfam" id="PF17864">
    <property type="entry name" value="AAA_lid_4"/>
    <property type="match status" value="1"/>
</dbReference>
<dbReference type="Pfam" id="PF05491">
    <property type="entry name" value="RuvB_C"/>
    <property type="match status" value="1"/>
</dbReference>
<dbReference type="Pfam" id="PF05496">
    <property type="entry name" value="RuvB_N"/>
    <property type="match status" value="1"/>
</dbReference>
<dbReference type="PRINTS" id="PR00819">
    <property type="entry name" value="CBXCFQXSUPER"/>
</dbReference>
<dbReference type="SMART" id="SM00382">
    <property type="entry name" value="AAA"/>
    <property type="match status" value="1"/>
</dbReference>
<dbReference type="SUPFAM" id="SSF52540">
    <property type="entry name" value="P-loop containing nucleoside triphosphate hydrolases"/>
    <property type="match status" value="1"/>
</dbReference>
<dbReference type="SUPFAM" id="SSF46785">
    <property type="entry name" value="Winged helix' DNA-binding domain"/>
    <property type="match status" value="1"/>
</dbReference>
<name>RUVB_BRUA1</name>
<proteinExistence type="inferred from homology"/>
<sequence>MSDRNPLIDADRRADEDNTLRPQTLDDFVGQAAARANLKVFIEAAKVRGEALDHVLFVGPPGLGKTTLAQIMAKELGVNFRSTSGPVIAKAGDLAALLTNLEERDVLFIDEIHRLSPAVEEILYPAMEDFQLDLIIGEGPAARSVKIDLAKFTLVAATTRLGLLTTPLRDRFGIPVRLNFYTVEELEYIVRRGARIMQMGISSDGAREVARRSRGTPRIAGRLLRRVRDFALVAGADIIDRRIADEALSRLEVDNRGLDQLDRRYLNIIARNFGGGPVGIETIAAGLSEPRDAIEDIIEPYLIQQGFLQRTPRGRVLTAVAWQHLGLPAPAEIIQQSQYGLFMEDE</sequence>
<comment type="function">
    <text evidence="1">The RuvA-RuvB-RuvC complex processes Holliday junction (HJ) DNA during genetic recombination and DNA repair, while the RuvA-RuvB complex plays an important role in the rescue of blocked DNA replication forks via replication fork reversal (RFR). RuvA specifically binds to HJ cruciform DNA, conferring on it an open structure. The RuvB hexamer acts as an ATP-dependent pump, pulling dsDNA into and through the RuvAB complex. RuvB forms 2 homohexamers on either side of HJ DNA bound by 1 or 2 RuvA tetramers; 4 subunits per hexamer contact DNA at a time. Coordinated motions by a converter formed by DNA-disengaged RuvB subunits stimulates ATP hydrolysis and nucleotide exchange. Immobilization of the converter enables RuvB to convert the ATP-contained energy into a lever motion, pulling 2 nucleotides of DNA out of the RuvA tetramer per ATP hydrolyzed, thus driving DNA branch migration. The RuvB motors rotate together with the DNA substrate, which together with the progressing nucleotide cycle form the mechanistic basis for DNA recombination by continuous HJ branch migration. Branch migration allows RuvC to scan DNA until it finds its consensus sequence, where it cleaves and resolves cruciform DNA.</text>
</comment>
<comment type="catalytic activity">
    <reaction evidence="1">
        <text>ATP + H2O = ADP + phosphate + H(+)</text>
        <dbReference type="Rhea" id="RHEA:13065"/>
        <dbReference type="ChEBI" id="CHEBI:15377"/>
        <dbReference type="ChEBI" id="CHEBI:15378"/>
        <dbReference type="ChEBI" id="CHEBI:30616"/>
        <dbReference type="ChEBI" id="CHEBI:43474"/>
        <dbReference type="ChEBI" id="CHEBI:456216"/>
    </reaction>
</comment>
<comment type="subunit">
    <text evidence="1">Homohexamer. Forms an RuvA(8)-RuvB(12)-Holliday junction (HJ) complex. HJ DNA is sandwiched between 2 RuvA tetramers; dsDNA enters through RuvA and exits via RuvB. An RuvB hexamer assembles on each DNA strand where it exits the tetramer. Each RuvB hexamer is contacted by two RuvA subunits (via domain III) on 2 adjacent RuvB subunits; this complex drives branch migration. In the full resolvosome a probable DNA-RuvA(4)-RuvB(12)-RuvC(2) complex forms which resolves the HJ.</text>
</comment>
<comment type="subcellular location">
    <subcellularLocation>
        <location evidence="1">Cytoplasm</location>
    </subcellularLocation>
</comment>
<comment type="domain">
    <text evidence="1">Has 3 domains, the large (RuvB-L) and small ATPase (RuvB-S) domains and the C-terminal head (RuvB-H) domain. The head domain binds DNA, while the ATPase domains jointly bind ATP, ADP or are empty depending on the state of the subunit in the translocation cycle. During a single DNA translocation step the structure of each domain remains the same, but their relative positions change.</text>
</comment>
<comment type="similarity">
    <text evidence="1">Belongs to the RuvB family.</text>
</comment>
<protein>
    <recommendedName>
        <fullName evidence="1">Holliday junction branch migration complex subunit RuvB</fullName>
        <ecNumber evidence="1">3.6.4.-</ecNumber>
    </recommendedName>
</protein>
<evidence type="ECO:0000255" key="1">
    <source>
        <dbReference type="HAMAP-Rule" id="MF_00016"/>
    </source>
</evidence>
<feature type="chain" id="PRO_1000089620" description="Holliday junction branch migration complex subunit RuvB">
    <location>
        <begin position="1"/>
        <end position="346"/>
    </location>
</feature>
<feature type="region of interest" description="Large ATPase domain (RuvB-L)" evidence="1">
    <location>
        <begin position="1"/>
        <end position="181"/>
    </location>
</feature>
<feature type="region of interest" description="Small ATPAse domain (RuvB-S)" evidence="1">
    <location>
        <begin position="182"/>
        <end position="252"/>
    </location>
</feature>
<feature type="region of interest" description="Head domain (RuvB-H)" evidence="1">
    <location>
        <begin position="255"/>
        <end position="346"/>
    </location>
</feature>
<feature type="binding site" evidence="1">
    <location>
        <position position="20"/>
    </location>
    <ligand>
        <name>ATP</name>
        <dbReference type="ChEBI" id="CHEBI:30616"/>
    </ligand>
</feature>
<feature type="binding site" evidence="1">
    <location>
        <position position="21"/>
    </location>
    <ligand>
        <name>ATP</name>
        <dbReference type="ChEBI" id="CHEBI:30616"/>
    </ligand>
</feature>
<feature type="binding site" evidence="1">
    <location>
        <position position="62"/>
    </location>
    <ligand>
        <name>ATP</name>
        <dbReference type="ChEBI" id="CHEBI:30616"/>
    </ligand>
</feature>
<feature type="binding site" evidence="1">
    <location>
        <position position="65"/>
    </location>
    <ligand>
        <name>ATP</name>
        <dbReference type="ChEBI" id="CHEBI:30616"/>
    </ligand>
</feature>
<feature type="binding site" evidence="1">
    <location>
        <position position="66"/>
    </location>
    <ligand>
        <name>ATP</name>
        <dbReference type="ChEBI" id="CHEBI:30616"/>
    </ligand>
</feature>
<feature type="binding site" evidence="1">
    <location>
        <position position="66"/>
    </location>
    <ligand>
        <name>Mg(2+)</name>
        <dbReference type="ChEBI" id="CHEBI:18420"/>
    </ligand>
</feature>
<feature type="binding site" evidence="1">
    <location>
        <position position="67"/>
    </location>
    <ligand>
        <name>ATP</name>
        <dbReference type="ChEBI" id="CHEBI:30616"/>
    </ligand>
</feature>
<feature type="binding site" evidence="1">
    <location>
        <begin position="128"/>
        <end position="130"/>
    </location>
    <ligand>
        <name>ATP</name>
        <dbReference type="ChEBI" id="CHEBI:30616"/>
    </ligand>
</feature>
<feature type="binding site" evidence="1">
    <location>
        <position position="171"/>
    </location>
    <ligand>
        <name>ATP</name>
        <dbReference type="ChEBI" id="CHEBI:30616"/>
    </ligand>
</feature>
<feature type="binding site" evidence="1">
    <location>
        <position position="181"/>
    </location>
    <ligand>
        <name>ATP</name>
        <dbReference type="ChEBI" id="CHEBI:30616"/>
    </ligand>
</feature>
<feature type="binding site" evidence="1">
    <location>
        <position position="218"/>
    </location>
    <ligand>
        <name>ATP</name>
        <dbReference type="ChEBI" id="CHEBI:30616"/>
    </ligand>
</feature>
<feature type="binding site" evidence="1">
    <location>
        <position position="291"/>
    </location>
    <ligand>
        <name>DNA</name>
        <dbReference type="ChEBI" id="CHEBI:16991"/>
    </ligand>
</feature>
<feature type="binding site" evidence="1">
    <location>
        <position position="310"/>
    </location>
    <ligand>
        <name>DNA</name>
        <dbReference type="ChEBI" id="CHEBI:16991"/>
    </ligand>
</feature>
<feature type="binding site" evidence="1">
    <location>
        <position position="315"/>
    </location>
    <ligand>
        <name>DNA</name>
        <dbReference type="ChEBI" id="CHEBI:16991"/>
    </ligand>
</feature>
<accession>B2S7D9</accession>
<reference key="1">
    <citation type="journal article" date="2008" name="PLoS ONE">
        <title>Genome sequence of Brucella abortus vaccine strain S19 compared to virulent strains yields candidate virulence genes.</title>
        <authorList>
            <person name="Crasta O.R."/>
            <person name="Folkerts O."/>
            <person name="Fei Z."/>
            <person name="Mane S.P."/>
            <person name="Evans C."/>
            <person name="Martino-Catt S."/>
            <person name="Bricker B."/>
            <person name="Yu G."/>
            <person name="Du L."/>
            <person name="Sobral B.W."/>
        </authorList>
    </citation>
    <scope>NUCLEOTIDE SEQUENCE [LARGE SCALE GENOMIC DNA]</scope>
    <source>
        <strain>S19</strain>
    </source>
</reference>